<proteinExistence type="evidence at protein level"/>
<comment type="function">
    <text evidence="2">May catalyze the biosynthesis of dTMP using an unknown cosubstrate. In vitro, also catalyzes the dehalogenation of 5-bromo-deoxyuridine monophosphate (Br-dUMP) and the tritium exchange of [5-3H]deoxyuridine monophosphate ([5-3H]dUMP).</text>
</comment>
<comment type="biophysicochemical properties">
    <kinetics>
        <KM evidence="2">7 uM for [5-3H]dUMP</KM>
        <KM evidence="2">14 uM for Br-dUMP</KM>
    </kinetics>
    <phDependence>
        <text evidence="2">Optimum pH is 9.0 with [5-3H]dUMP as substrate, and 7.0 with Br-dUMP as substrate.</text>
    </phDependence>
    <temperatureDependence>
        <text evidence="2">Optimum temperature is 70 degrees Celsius with [5-3H]dUMP as substrate, and 50-70 degrees Celsius with Br-dUMP as substrate. Heating the protein for 10 minutes at 100 degrees Celsius abolished the activity.</text>
    </temperatureDependence>
</comment>
<comment type="pathway">
    <text>Pyrimidine metabolism; dTTP biosynthesis.</text>
</comment>
<comment type="subunit">
    <text evidence="2">Monomer.</text>
</comment>
<comment type="subcellular location">
    <subcellularLocation>
        <location evidence="1">Cytoplasm</location>
    </subcellularLocation>
</comment>
<comment type="similarity">
    <text evidence="3">Belongs to the thymidylate synthase family. Archaeal-type ThyA subfamily.</text>
</comment>
<name>TYSY_METTM</name>
<organism>
    <name type="scientific">Methanothermobacter marburgensis (strain ATCC BAA-927 / DSM 2133 / JCM 14651 / NBRC 100331 / OCM 82 / Marburg)</name>
    <name type="common">Methanobacterium thermoautotrophicum</name>
    <dbReference type="NCBI Taxonomy" id="79929"/>
    <lineage>
        <taxon>Archaea</taxon>
        <taxon>Methanobacteriati</taxon>
        <taxon>Methanobacteriota</taxon>
        <taxon>Methanomada group</taxon>
        <taxon>Methanobacteria</taxon>
        <taxon>Methanobacteriales</taxon>
        <taxon>Methanobacteriaceae</taxon>
        <taxon>Methanothermobacter</taxon>
    </lineage>
</organism>
<evidence type="ECO:0000250" key="1"/>
<evidence type="ECO:0000269" key="2">
    <source>
    </source>
</evidence>
<evidence type="ECO:0000305" key="3"/>
<accession>P80305</accession>
<accession>D9PX15</accession>
<gene>
    <name type="primary">thyA</name>
    <name type="ordered locus">MTBMA_c11700</name>
</gene>
<dbReference type="EC" id="2.1.1.-"/>
<dbReference type="EMBL" id="X92082">
    <property type="protein sequence ID" value="CAA63063.1"/>
    <property type="molecule type" value="Genomic_DNA"/>
</dbReference>
<dbReference type="EMBL" id="CP001710">
    <property type="protein sequence ID" value="ADL58763.1"/>
    <property type="molecule type" value="Genomic_DNA"/>
</dbReference>
<dbReference type="RefSeq" id="WP_013295985.1">
    <property type="nucleotide sequence ID" value="NC_014408.1"/>
</dbReference>
<dbReference type="SMR" id="P80305"/>
<dbReference type="STRING" id="79929.MTBMA_c11700"/>
<dbReference type="PaxDb" id="79929-MTBMA_c11700"/>
<dbReference type="GeneID" id="77399942"/>
<dbReference type="GeneID" id="9704878"/>
<dbReference type="KEGG" id="mmg:MTBMA_c11700"/>
<dbReference type="PATRIC" id="fig|79929.8.peg.1139"/>
<dbReference type="HOGENOM" id="CLU_084975_0_0_2"/>
<dbReference type="OrthoDB" id="50118at2157"/>
<dbReference type="UniPathway" id="UPA00575"/>
<dbReference type="Proteomes" id="UP000000345">
    <property type="component" value="Chromosome"/>
</dbReference>
<dbReference type="GO" id="GO:0005829">
    <property type="term" value="C:cytosol"/>
    <property type="evidence" value="ECO:0007669"/>
    <property type="project" value="TreeGrafter"/>
</dbReference>
<dbReference type="GO" id="GO:0004799">
    <property type="term" value="F:thymidylate synthase activity"/>
    <property type="evidence" value="ECO:0007669"/>
    <property type="project" value="UniProtKB-UniRule"/>
</dbReference>
<dbReference type="GO" id="GO:0006231">
    <property type="term" value="P:dTMP biosynthetic process"/>
    <property type="evidence" value="ECO:0007669"/>
    <property type="project" value="UniProtKB-UniRule"/>
</dbReference>
<dbReference type="GO" id="GO:0006235">
    <property type="term" value="P:dTTP biosynthetic process"/>
    <property type="evidence" value="ECO:0007669"/>
    <property type="project" value="UniProtKB-UniRule"/>
</dbReference>
<dbReference type="GO" id="GO:0032259">
    <property type="term" value="P:methylation"/>
    <property type="evidence" value="ECO:0007669"/>
    <property type="project" value="UniProtKB-KW"/>
</dbReference>
<dbReference type="CDD" id="cd00351">
    <property type="entry name" value="TS_Pyrimidine_HMase"/>
    <property type="match status" value="1"/>
</dbReference>
<dbReference type="Gene3D" id="3.30.572.10">
    <property type="entry name" value="Thymidylate synthase/dCMP hydroxymethylase domain"/>
    <property type="match status" value="1"/>
</dbReference>
<dbReference type="HAMAP" id="MF_01686">
    <property type="entry name" value="Thymidy_synth_arch"/>
    <property type="match status" value="1"/>
</dbReference>
<dbReference type="InterPro" id="IPR045097">
    <property type="entry name" value="Thymidate_synth/dCMP_Mease"/>
</dbReference>
<dbReference type="InterPro" id="IPR023451">
    <property type="entry name" value="Thymidate_synth/dCMP_Mease_dom"/>
</dbReference>
<dbReference type="InterPro" id="IPR036926">
    <property type="entry name" value="Thymidate_synth/dCMP_Mease_sf"/>
</dbReference>
<dbReference type="InterPro" id="IPR014620">
    <property type="entry name" value="Thymidylate_synthase_arc"/>
</dbReference>
<dbReference type="InterPro" id="IPR020940">
    <property type="entry name" value="Thymidylate_synthase_AS"/>
</dbReference>
<dbReference type="NCBIfam" id="TIGR03283">
    <property type="entry name" value="thy_syn_methano"/>
    <property type="match status" value="1"/>
</dbReference>
<dbReference type="PANTHER" id="PTHR11548">
    <property type="entry name" value="THYMIDYLATE SYNTHASE 1"/>
    <property type="match status" value="1"/>
</dbReference>
<dbReference type="PANTHER" id="PTHR11548:SF1">
    <property type="entry name" value="THYMIDYLATE SYNTHASE 1"/>
    <property type="match status" value="1"/>
</dbReference>
<dbReference type="Pfam" id="PF00303">
    <property type="entry name" value="Thymidylat_synt"/>
    <property type="match status" value="1"/>
</dbReference>
<dbReference type="PIRSF" id="PIRSF036752">
    <property type="entry name" value="TSase_MJ051"/>
    <property type="match status" value="1"/>
</dbReference>
<dbReference type="SUPFAM" id="SSF55831">
    <property type="entry name" value="Thymidylate synthase/dCMP hydroxymethylase"/>
    <property type="match status" value="1"/>
</dbReference>
<dbReference type="PROSITE" id="PS00091">
    <property type="entry name" value="THYMIDYLATE_SYNTHASE"/>
    <property type="match status" value="1"/>
</dbReference>
<reference key="1">
    <citation type="journal article" date="1996" name="Eur. J. Biochem.">
        <title>Primary structure of cyclohydrolase (Mch) from Methanobacterium thermoautotrophicum (strain Marburg) and functional expression of the mch gene in Escherichia coli.</title>
        <authorList>
            <person name="Vaupel M."/>
            <person name="Dietz H."/>
            <person name="Linder D."/>
            <person name="Thauer R.K."/>
        </authorList>
    </citation>
    <scope>NUCLEOTIDE SEQUENCE [GENOMIC DNA]</scope>
    <source>
        <strain>ATCC BAA-927 / DSM 2133 / JCM 14651 / NBRC 100331 / OCM 82 / Marburg</strain>
    </source>
</reference>
<reference key="2">
    <citation type="journal article" date="2010" name="J. Bacteriol.">
        <title>Complete genome sequence of Methanothermobacter marburgensis, a methanoarchaeon model organism.</title>
        <authorList>
            <person name="Liesegang H."/>
            <person name="Kaster A.K."/>
            <person name="Wiezer A."/>
            <person name="Goenrich M."/>
            <person name="Wollherr A."/>
            <person name="Seedorf H."/>
            <person name="Gottschalk G."/>
            <person name="Thauer R.K."/>
        </authorList>
    </citation>
    <scope>NUCLEOTIDE SEQUENCE [LARGE SCALE GENOMIC DNA]</scope>
    <source>
        <strain>ATCC BAA-927 / DSM 2133 / JCM 14651 / NBRC 100331 / OCM 82 / Marburg</strain>
    </source>
</reference>
<reference key="3">
    <citation type="journal article" date="1994" name="Eur. J. Biochem.">
        <title>Purification and partial characterization of a putative thymidylate synthase from Methanobacterium thermoautotrophicum.</title>
        <authorList>
            <person name="Krone U.E."/>
            <person name="McFarlan S.C."/>
            <person name="Hogenkamp H.P.C."/>
        </authorList>
    </citation>
    <scope>PROTEIN SEQUENCE OF 2-30</scope>
    <scope>FUNCTION</scope>
    <scope>BIOPHYSICOCHEMICAL PROPERTIES</scope>
    <scope>SUBUNIT</scope>
    <source>
        <strain>ATCC BAA-927 / DSM 2133 / JCM 14651 / NBRC 100331 / OCM 82 / Marburg</strain>
    </source>
</reference>
<keyword id="KW-0963">Cytoplasm</keyword>
<keyword id="KW-0903">Direct protein sequencing</keyword>
<keyword id="KW-0489">Methyltransferase</keyword>
<keyword id="KW-0545">Nucleotide biosynthesis</keyword>
<keyword id="KW-0808">Transferase</keyword>
<sequence length="223" mass="25589">MAYEISVDEIAEGWLKLVEKIMSDGREIRDERGSLTREVMNTVVTIKNPLGRSGDFYHLPARSLINIRVPEGYFWSGEKLEKYSEQFLSDDRKGFVYTYGNRLRAHFGVDQVDRAIERLKNCKESRRATMVTWDPKIDTESDEVPCMILVDFKVREGRLFTTALWRSHDIYGAWFPNAVGLAYLADHVASEVGVEVGHITIHSISAHIYEVNFKEAKEVIKNG</sequence>
<feature type="initiator methionine" description="Removed" evidence="2">
    <location>
        <position position="1"/>
    </location>
</feature>
<feature type="chain" id="PRO_0000141059" description="Putative thymidylate synthase">
    <location>
        <begin position="2"/>
        <end position="223"/>
    </location>
</feature>
<feature type="active site" evidence="1">
    <location>
        <position position="146"/>
    </location>
</feature>
<protein>
    <recommendedName>
        <fullName>Putative thymidylate synthase</fullName>
        <shortName>TS</shortName>
        <shortName>TSase</shortName>
        <ecNumber>2.1.1.-</ecNumber>
    </recommendedName>
</protein>